<accession>P42458</accession>
<gene>
    <name type="ordered locus">Cgl0830</name>
    <name type="ordered locus">cg0950</name>
</gene>
<comment type="function">
    <text>PPIases accelerate the folding of proteins.</text>
</comment>
<comment type="catalytic activity">
    <reaction>
        <text>[protein]-peptidylproline (omega=180) = [protein]-peptidylproline (omega=0)</text>
        <dbReference type="Rhea" id="RHEA:16237"/>
        <dbReference type="Rhea" id="RHEA-COMP:10747"/>
        <dbReference type="Rhea" id="RHEA-COMP:10748"/>
        <dbReference type="ChEBI" id="CHEBI:83833"/>
        <dbReference type="ChEBI" id="CHEBI:83834"/>
        <dbReference type="EC" id="5.2.1.8"/>
    </reaction>
</comment>
<comment type="similarity">
    <text evidence="2">Belongs to the FKBP-type PPIase family.</text>
</comment>
<evidence type="ECO:0000255" key="1">
    <source>
        <dbReference type="PROSITE-ProRule" id="PRU00277"/>
    </source>
</evidence>
<evidence type="ECO:0000305" key="2"/>
<sequence length="118" mass="12539">MEKPQIELPVGPAPEDLVISDIIVGEGAEARPGGEVEVHYVGVDFETGEEFDSSWDRGQTSQFPLNGLIAGWQEGIPGMKVGGRRQLTIPPEAAYGPEGSGHPLSGRTLVFIIDLISA</sequence>
<organism>
    <name type="scientific">Corynebacterium glutamicum (strain ATCC 13032 / DSM 20300 / JCM 1318 / BCRC 11384 / CCUG 27702 / LMG 3730 / NBRC 12168 / NCIMB 10025 / NRRL B-2784 / 534)</name>
    <dbReference type="NCBI Taxonomy" id="196627"/>
    <lineage>
        <taxon>Bacteria</taxon>
        <taxon>Bacillati</taxon>
        <taxon>Actinomycetota</taxon>
        <taxon>Actinomycetes</taxon>
        <taxon>Mycobacteriales</taxon>
        <taxon>Corynebacteriaceae</taxon>
        <taxon>Corynebacterium</taxon>
    </lineage>
</organism>
<reference key="1">
    <citation type="journal article" date="1994" name="Microbiology">
        <title>Nucleotide sequence, expression and transcriptional analysis of the Corynebacterium glutamicum gltA gene encoding citrate synthase.</title>
        <authorList>
            <person name="Eikmanns B.J."/>
            <person name="Thum-Schmitz N."/>
            <person name="Eggeling L."/>
            <person name="Luedtke K.U."/>
            <person name="Sahm H."/>
        </authorList>
    </citation>
    <scope>NUCLEOTIDE SEQUENCE [GENOMIC DNA]</scope>
    <source>
        <strain>ATCC 13032 / DSM 20300 / JCM 1318 / BCRC 11384 / CCUG 27702 / LMG 3730 / NBRC 12168 / NCIMB 10025 / NRRL B-2784 / 534</strain>
    </source>
</reference>
<reference key="2">
    <citation type="journal article" date="2003" name="Appl. Microbiol. Biotechnol.">
        <title>The Corynebacterium glutamicum genome: features and impacts on biotechnological processes.</title>
        <authorList>
            <person name="Ikeda M."/>
            <person name="Nakagawa S."/>
        </authorList>
    </citation>
    <scope>NUCLEOTIDE SEQUENCE [LARGE SCALE GENOMIC DNA]</scope>
    <source>
        <strain>ATCC 13032 / DSM 20300 / JCM 1318 / BCRC 11384 / CCUG 27702 / LMG 3730 / NBRC 12168 / NCIMB 10025 / NRRL B-2784 / 534</strain>
    </source>
</reference>
<reference key="3">
    <citation type="journal article" date="2003" name="J. Biotechnol.">
        <title>The complete Corynebacterium glutamicum ATCC 13032 genome sequence and its impact on the production of L-aspartate-derived amino acids and vitamins.</title>
        <authorList>
            <person name="Kalinowski J."/>
            <person name="Bathe B."/>
            <person name="Bartels D."/>
            <person name="Bischoff N."/>
            <person name="Bott M."/>
            <person name="Burkovski A."/>
            <person name="Dusch N."/>
            <person name="Eggeling L."/>
            <person name="Eikmanns B.J."/>
            <person name="Gaigalat L."/>
            <person name="Goesmann A."/>
            <person name="Hartmann M."/>
            <person name="Huthmacher K."/>
            <person name="Kraemer R."/>
            <person name="Linke B."/>
            <person name="McHardy A.C."/>
            <person name="Meyer F."/>
            <person name="Moeckel B."/>
            <person name="Pfefferle W."/>
            <person name="Puehler A."/>
            <person name="Rey D.A."/>
            <person name="Rueckert C."/>
            <person name="Rupp O."/>
            <person name="Sahm H."/>
            <person name="Wendisch V.F."/>
            <person name="Wiegraebe I."/>
            <person name="Tauch A."/>
        </authorList>
    </citation>
    <scope>NUCLEOTIDE SEQUENCE [LARGE SCALE GENOMIC DNA]</scope>
    <source>
        <strain>ATCC 13032 / DSM 20300 / JCM 1318 / BCRC 11384 / CCUG 27702 / LMG 3730 / NBRC 12168 / NCIMB 10025 / NRRL B-2784 / 534</strain>
    </source>
</reference>
<protein>
    <recommendedName>
        <fullName>Probable FK506-binding protein</fullName>
        <ecNumber>5.2.1.8</ecNumber>
    </recommendedName>
    <alternativeName>
        <fullName>Peptidyl-prolyl cis-trans isomerase</fullName>
        <shortName>PPIase</shortName>
    </alternativeName>
    <alternativeName>
        <fullName>Rotamase</fullName>
    </alternativeName>
</protein>
<name>FKBP_CORGL</name>
<feature type="chain" id="PRO_0000075353" description="Probable FK506-binding protein">
    <location>
        <begin position="1"/>
        <end position="118"/>
    </location>
</feature>
<feature type="domain" description="PPIase FKBP-type" evidence="1">
    <location>
        <begin position="33"/>
        <end position="118"/>
    </location>
</feature>
<dbReference type="EC" id="5.2.1.8"/>
<dbReference type="EMBL" id="X66112">
    <property type="protein sequence ID" value="CAA46903.1"/>
    <property type="molecule type" value="Genomic_DNA"/>
</dbReference>
<dbReference type="EMBL" id="BA000036">
    <property type="protein sequence ID" value="BAB98223.1"/>
    <property type="molecule type" value="Genomic_DNA"/>
</dbReference>
<dbReference type="EMBL" id="BX927150">
    <property type="protein sequence ID" value="CAF19536.1"/>
    <property type="molecule type" value="Genomic_DNA"/>
</dbReference>
<dbReference type="PIR" id="I40718">
    <property type="entry name" value="I40718"/>
</dbReference>
<dbReference type="RefSeq" id="NP_600059.1">
    <property type="nucleotide sequence ID" value="NC_003450.3"/>
</dbReference>
<dbReference type="SMR" id="P42458"/>
<dbReference type="STRING" id="196627.cg0950"/>
<dbReference type="KEGG" id="cgb:cg0950"/>
<dbReference type="KEGG" id="cgl:Cgl0830"/>
<dbReference type="PATRIC" id="fig|196627.13.peg.814"/>
<dbReference type="eggNOG" id="COG0545">
    <property type="taxonomic scope" value="Bacteria"/>
</dbReference>
<dbReference type="HOGENOM" id="CLU_013615_12_0_11"/>
<dbReference type="OrthoDB" id="25996at2"/>
<dbReference type="BioCyc" id="CORYNE:G18NG-10399-MONOMER"/>
<dbReference type="BRENDA" id="5.2.1.8">
    <property type="organism ID" value="960"/>
</dbReference>
<dbReference type="Proteomes" id="UP000000582">
    <property type="component" value="Chromosome"/>
</dbReference>
<dbReference type="Proteomes" id="UP000001009">
    <property type="component" value="Chromosome"/>
</dbReference>
<dbReference type="GO" id="GO:0003755">
    <property type="term" value="F:peptidyl-prolyl cis-trans isomerase activity"/>
    <property type="evidence" value="ECO:0007669"/>
    <property type="project" value="UniProtKB-KW"/>
</dbReference>
<dbReference type="Gene3D" id="3.10.50.40">
    <property type="match status" value="1"/>
</dbReference>
<dbReference type="InterPro" id="IPR046357">
    <property type="entry name" value="PPIase_dom_sf"/>
</dbReference>
<dbReference type="InterPro" id="IPR001179">
    <property type="entry name" value="PPIase_FKBP_dom"/>
</dbReference>
<dbReference type="PANTHER" id="PTHR43811:SF19">
    <property type="entry name" value="39 KDA FK506-BINDING NUCLEAR PROTEIN"/>
    <property type="match status" value="1"/>
</dbReference>
<dbReference type="PANTHER" id="PTHR43811">
    <property type="entry name" value="FKBP-TYPE PEPTIDYL-PROLYL CIS-TRANS ISOMERASE FKPA"/>
    <property type="match status" value="1"/>
</dbReference>
<dbReference type="Pfam" id="PF00254">
    <property type="entry name" value="FKBP_C"/>
    <property type="match status" value="1"/>
</dbReference>
<dbReference type="SUPFAM" id="SSF54534">
    <property type="entry name" value="FKBP-like"/>
    <property type="match status" value="1"/>
</dbReference>
<dbReference type="PROSITE" id="PS50059">
    <property type="entry name" value="FKBP_PPIASE"/>
    <property type="match status" value="1"/>
</dbReference>
<keyword id="KW-0413">Isomerase</keyword>
<keyword id="KW-1185">Reference proteome</keyword>
<keyword id="KW-0697">Rotamase</keyword>
<proteinExistence type="inferred from homology"/>